<reference key="1">
    <citation type="journal article" date="2006" name="Proc. Natl. Acad. Sci. U.S.A.">
        <title>Molecular genetic anatomy of inter- and intraserotype variation in the human bacterial pathogen group A Streptococcus.</title>
        <authorList>
            <person name="Beres S.B."/>
            <person name="Richter E.W."/>
            <person name="Nagiec M.J."/>
            <person name="Sumby P."/>
            <person name="Porcella S.F."/>
            <person name="DeLeo F.R."/>
            <person name="Musser J.M."/>
        </authorList>
    </citation>
    <scope>NUCLEOTIDE SEQUENCE [LARGE SCALE GENOMIC DNA]</scope>
    <source>
        <strain>MGAS10270</strain>
    </source>
</reference>
<sequence>MKLHELKAAEGSRKVRNRVGRGTSSGNGKTSGRGQKGQKARSGGGVRLGFEGGQTPLFRRIPKRGFTNINTKEYALVNLDQLNVFDDGTEVTPAILKDAGIVRAEKSGVKVLGNGELTKKLTVKAAKFSKSAEAAIIAKGGSIEVI</sequence>
<name>RL15_STRPD</name>
<accession>Q1JJ43</accession>
<comment type="function">
    <text evidence="1">Binds to the 23S rRNA.</text>
</comment>
<comment type="subunit">
    <text evidence="1">Part of the 50S ribosomal subunit.</text>
</comment>
<comment type="similarity">
    <text evidence="1">Belongs to the universal ribosomal protein uL15 family.</text>
</comment>
<dbReference type="EMBL" id="CP000260">
    <property type="protein sequence ID" value="ABF33130.1"/>
    <property type="molecule type" value="Genomic_DNA"/>
</dbReference>
<dbReference type="RefSeq" id="WP_002986622.1">
    <property type="nucleotide sequence ID" value="NZ_CVUH01000001.1"/>
</dbReference>
<dbReference type="SMR" id="Q1JJ43"/>
<dbReference type="GeneID" id="69900045"/>
<dbReference type="KEGG" id="sph:MGAS10270_Spy0065"/>
<dbReference type="HOGENOM" id="CLU_055188_4_2_9"/>
<dbReference type="Proteomes" id="UP000002436">
    <property type="component" value="Chromosome"/>
</dbReference>
<dbReference type="GO" id="GO:0022625">
    <property type="term" value="C:cytosolic large ribosomal subunit"/>
    <property type="evidence" value="ECO:0007669"/>
    <property type="project" value="TreeGrafter"/>
</dbReference>
<dbReference type="GO" id="GO:0019843">
    <property type="term" value="F:rRNA binding"/>
    <property type="evidence" value="ECO:0007669"/>
    <property type="project" value="UniProtKB-UniRule"/>
</dbReference>
<dbReference type="GO" id="GO:0003735">
    <property type="term" value="F:structural constituent of ribosome"/>
    <property type="evidence" value="ECO:0007669"/>
    <property type="project" value="InterPro"/>
</dbReference>
<dbReference type="GO" id="GO:0006412">
    <property type="term" value="P:translation"/>
    <property type="evidence" value="ECO:0007669"/>
    <property type="project" value="UniProtKB-UniRule"/>
</dbReference>
<dbReference type="Gene3D" id="3.100.10.10">
    <property type="match status" value="1"/>
</dbReference>
<dbReference type="HAMAP" id="MF_01341">
    <property type="entry name" value="Ribosomal_uL15"/>
    <property type="match status" value="1"/>
</dbReference>
<dbReference type="InterPro" id="IPR030878">
    <property type="entry name" value="Ribosomal_uL15"/>
</dbReference>
<dbReference type="InterPro" id="IPR021131">
    <property type="entry name" value="Ribosomal_uL15/eL18"/>
</dbReference>
<dbReference type="InterPro" id="IPR036227">
    <property type="entry name" value="Ribosomal_uL15/eL18_sf"/>
</dbReference>
<dbReference type="InterPro" id="IPR005749">
    <property type="entry name" value="Ribosomal_uL15_bac-type"/>
</dbReference>
<dbReference type="InterPro" id="IPR001196">
    <property type="entry name" value="Ribosomal_uL15_CS"/>
</dbReference>
<dbReference type="NCBIfam" id="TIGR01071">
    <property type="entry name" value="rplO_bact"/>
    <property type="match status" value="1"/>
</dbReference>
<dbReference type="PANTHER" id="PTHR12934">
    <property type="entry name" value="50S RIBOSOMAL PROTEIN L15"/>
    <property type="match status" value="1"/>
</dbReference>
<dbReference type="PANTHER" id="PTHR12934:SF11">
    <property type="entry name" value="LARGE RIBOSOMAL SUBUNIT PROTEIN UL15M"/>
    <property type="match status" value="1"/>
</dbReference>
<dbReference type="Pfam" id="PF00828">
    <property type="entry name" value="Ribosomal_L27A"/>
    <property type="match status" value="1"/>
</dbReference>
<dbReference type="SUPFAM" id="SSF52080">
    <property type="entry name" value="Ribosomal proteins L15p and L18e"/>
    <property type="match status" value="1"/>
</dbReference>
<dbReference type="PROSITE" id="PS00475">
    <property type="entry name" value="RIBOSOMAL_L15"/>
    <property type="match status" value="1"/>
</dbReference>
<evidence type="ECO:0000255" key="1">
    <source>
        <dbReference type="HAMAP-Rule" id="MF_01341"/>
    </source>
</evidence>
<evidence type="ECO:0000256" key="2">
    <source>
        <dbReference type="SAM" id="MobiDB-lite"/>
    </source>
</evidence>
<evidence type="ECO:0000305" key="3"/>
<proteinExistence type="inferred from homology"/>
<gene>
    <name evidence="1" type="primary">rplO</name>
    <name type="ordered locus">MGAS10270_Spy0065</name>
</gene>
<feature type="chain" id="PRO_0000251571" description="Large ribosomal subunit protein uL15">
    <location>
        <begin position="1"/>
        <end position="146"/>
    </location>
</feature>
<feature type="region of interest" description="Disordered" evidence="2">
    <location>
        <begin position="1"/>
        <end position="51"/>
    </location>
</feature>
<feature type="compositionally biased region" description="Basic and acidic residues" evidence="2">
    <location>
        <begin position="1"/>
        <end position="13"/>
    </location>
</feature>
<feature type="compositionally biased region" description="Gly residues" evidence="2">
    <location>
        <begin position="23"/>
        <end position="35"/>
    </location>
</feature>
<feature type="compositionally biased region" description="Gly residues" evidence="2">
    <location>
        <begin position="42"/>
        <end position="51"/>
    </location>
</feature>
<organism>
    <name type="scientific">Streptococcus pyogenes serotype M2 (strain MGAS10270)</name>
    <dbReference type="NCBI Taxonomy" id="370552"/>
    <lineage>
        <taxon>Bacteria</taxon>
        <taxon>Bacillati</taxon>
        <taxon>Bacillota</taxon>
        <taxon>Bacilli</taxon>
        <taxon>Lactobacillales</taxon>
        <taxon>Streptococcaceae</taxon>
        <taxon>Streptococcus</taxon>
    </lineage>
</organism>
<protein>
    <recommendedName>
        <fullName evidence="1">Large ribosomal subunit protein uL15</fullName>
    </recommendedName>
    <alternativeName>
        <fullName evidence="3">50S ribosomal protein L15</fullName>
    </alternativeName>
</protein>
<keyword id="KW-0687">Ribonucleoprotein</keyword>
<keyword id="KW-0689">Ribosomal protein</keyword>
<keyword id="KW-0694">RNA-binding</keyword>
<keyword id="KW-0699">rRNA-binding</keyword>